<feature type="chain" id="PRO_0000162929" description="L-fuculose phosphate aldolase">
    <location>
        <begin position="1"/>
        <end position="215"/>
    </location>
</feature>
<feature type="active site" description="Proton donor/acceptor" evidence="1">
    <location>
        <position position="73"/>
    </location>
</feature>
<feature type="binding site" evidence="1">
    <location>
        <begin position="28"/>
        <end position="29"/>
    </location>
    <ligand>
        <name>substrate</name>
    </ligand>
</feature>
<feature type="binding site" evidence="1">
    <location>
        <begin position="43"/>
        <end position="44"/>
    </location>
    <ligand>
        <name>substrate</name>
    </ligand>
</feature>
<feature type="binding site" evidence="1">
    <location>
        <begin position="71"/>
        <end position="72"/>
    </location>
    <ligand>
        <name>substrate</name>
    </ligand>
</feature>
<feature type="binding site" evidence="1">
    <location>
        <position position="73"/>
    </location>
    <ligand>
        <name>Zn(2+)</name>
        <dbReference type="ChEBI" id="CHEBI:29105"/>
        <note>catalytic</note>
    </ligand>
</feature>
<feature type="binding site" evidence="1">
    <location>
        <position position="92"/>
    </location>
    <ligand>
        <name>Zn(2+)</name>
        <dbReference type="ChEBI" id="CHEBI:29105"/>
        <note>catalytic</note>
    </ligand>
</feature>
<feature type="binding site" evidence="1">
    <location>
        <position position="94"/>
    </location>
    <ligand>
        <name>Zn(2+)</name>
        <dbReference type="ChEBI" id="CHEBI:29105"/>
        <note>catalytic</note>
    </ligand>
</feature>
<feature type="binding site" evidence="1">
    <location>
        <position position="155"/>
    </location>
    <ligand>
        <name>Zn(2+)</name>
        <dbReference type="ChEBI" id="CHEBI:29105"/>
        <note>catalytic</note>
    </ligand>
</feature>
<feature type="site" description="Plays a key role in the stabilization of the transition state and positioning the aldehyde component" evidence="1">
    <location>
        <position position="113"/>
    </location>
</feature>
<feature type="site" description="Plays a key role in the stabilization of the transition state and positioning the aldehyde component" evidence="1">
    <location>
        <position position="131"/>
    </location>
</feature>
<feature type="site" description="Plays a key role in the stabilization of the transition state and positioning the aldehyde component" evidence="1">
    <location>
        <position position="209"/>
    </location>
</feature>
<proteinExistence type="inferred from homology"/>
<keyword id="KW-0054">Arabinose catabolism</keyword>
<keyword id="KW-0119">Carbohydrate metabolism</keyword>
<keyword id="KW-0294">Fucose metabolism</keyword>
<keyword id="KW-0456">Lyase</keyword>
<keyword id="KW-0479">Metal-binding</keyword>
<keyword id="KW-1185">Reference proteome</keyword>
<keyword id="KW-0862">Zinc</keyword>
<name>FUCA_SHIFL</name>
<gene>
    <name evidence="1" type="primary">fucA</name>
    <name type="ordered locus">SF2814</name>
    <name type="ordered locus">S3009</name>
</gene>
<evidence type="ECO:0000255" key="1">
    <source>
        <dbReference type="HAMAP-Rule" id="MF_00987"/>
    </source>
</evidence>
<protein>
    <recommendedName>
        <fullName evidence="1">L-fuculose phosphate aldolase</fullName>
        <ecNumber evidence="1">4.1.2.17</ecNumber>
    </recommendedName>
    <alternativeName>
        <fullName evidence="1">L-fuculose-1-phosphate aldolase</fullName>
    </alternativeName>
</protein>
<comment type="function">
    <text evidence="1">Involved in the degradation of L-fucose and D-arabinose. Catalyzes the reversible cleavage of L-fuculose 1-phosphate (Fuc1P) to yield dihydroxyacetone phosphate (DHAP) and L-lactaldehyde.</text>
</comment>
<comment type="catalytic activity">
    <reaction evidence="1">
        <text>L-fuculose 1-phosphate = (S)-lactaldehyde + dihydroxyacetone phosphate</text>
        <dbReference type="Rhea" id="RHEA:12933"/>
        <dbReference type="ChEBI" id="CHEBI:18041"/>
        <dbReference type="ChEBI" id="CHEBI:57642"/>
        <dbReference type="ChEBI" id="CHEBI:57846"/>
        <dbReference type="EC" id="4.1.2.17"/>
    </reaction>
</comment>
<comment type="cofactor">
    <cofactor evidence="1">
        <name>Zn(2+)</name>
        <dbReference type="ChEBI" id="CHEBI:29105"/>
    </cofactor>
    <text evidence="1">Binds 1 zinc ion per subunit.</text>
</comment>
<comment type="pathway">
    <text evidence="1">Carbohydrate degradation; L-fucose degradation; L-lactaldehyde and glycerone phosphate from L-fucose: step 3/3.</text>
</comment>
<comment type="subunit">
    <text evidence="1">Homotetramer.</text>
</comment>
<comment type="similarity">
    <text evidence="1">Belongs to the aldolase class II family. AraD/FucA subfamily.</text>
</comment>
<accession>P0AB88</accession>
<accession>P11550</accession>
<reference key="1">
    <citation type="journal article" date="2002" name="Nucleic Acids Res.">
        <title>Genome sequence of Shigella flexneri 2a: insights into pathogenicity through comparison with genomes of Escherichia coli K12 and O157.</title>
        <authorList>
            <person name="Jin Q."/>
            <person name="Yuan Z."/>
            <person name="Xu J."/>
            <person name="Wang Y."/>
            <person name="Shen Y."/>
            <person name="Lu W."/>
            <person name="Wang J."/>
            <person name="Liu H."/>
            <person name="Yang J."/>
            <person name="Yang F."/>
            <person name="Zhang X."/>
            <person name="Zhang J."/>
            <person name="Yang G."/>
            <person name="Wu H."/>
            <person name="Qu D."/>
            <person name="Dong J."/>
            <person name="Sun L."/>
            <person name="Xue Y."/>
            <person name="Zhao A."/>
            <person name="Gao Y."/>
            <person name="Zhu J."/>
            <person name="Kan B."/>
            <person name="Ding K."/>
            <person name="Chen S."/>
            <person name="Cheng H."/>
            <person name="Yao Z."/>
            <person name="He B."/>
            <person name="Chen R."/>
            <person name="Ma D."/>
            <person name="Qiang B."/>
            <person name="Wen Y."/>
            <person name="Hou Y."/>
            <person name="Yu J."/>
        </authorList>
    </citation>
    <scope>NUCLEOTIDE SEQUENCE [LARGE SCALE GENOMIC DNA]</scope>
    <source>
        <strain>301 / Serotype 2a</strain>
    </source>
</reference>
<reference key="2">
    <citation type="journal article" date="2003" name="Infect. Immun.">
        <title>Complete genome sequence and comparative genomics of Shigella flexneri serotype 2a strain 2457T.</title>
        <authorList>
            <person name="Wei J."/>
            <person name="Goldberg M.B."/>
            <person name="Burland V."/>
            <person name="Venkatesan M.M."/>
            <person name="Deng W."/>
            <person name="Fournier G."/>
            <person name="Mayhew G.F."/>
            <person name="Plunkett G. III"/>
            <person name="Rose D.J."/>
            <person name="Darling A."/>
            <person name="Mau B."/>
            <person name="Perna N.T."/>
            <person name="Payne S.M."/>
            <person name="Runyen-Janecky L.J."/>
            <person name="Zhou S."/>
            <person name="Schwartz D.C."/>
            <person name="Blattner F.R."/>
        </authorList>
    </citation>
    <scope>NUCLEOTIDE SEQUENCE [LARGE SCALE GENOMIC DNA]</scope>
    <source>
        <strain>ATCC 700930 / 2457T / Serotype 2a</strain>
    </source>
</reference>
<organism>
    <name type="scientific">Shigella flexneri</name>
    <dbReference type="NCBI Taxonomy" id="623"/>
    <lineage>
        <taxon>Bacteria</taxon>
        <taxon>Pseudomonadati</taxon>
        <taxon>Pseudomonadota</taxon>
        <taxon>Gammaproteobacteria</taxon>
        <taxon>Enterobacterales</taxon>
        <taxon>Enterobacteriaceae</taxon>
        <taxon>Shigella</taxon>
    </lineage>
</organism>
<sequence>MERNKLARQIIDTCLEMTRLGLNQGTAGNVSVRYQDGMLITPTGIPYEKLTESHIVFIDGNGKHEEGKLPSSEWRFHMAAYQSRPDANAVVHNHAVHCTAVSILNRSIPAIHYMIAAAGGNSIPCAPYATFGTRELSEHVALALKNRKATLLQHHGLIACEVNLEKALWLAHEVEVLAQLYLTTLAITDPVPVLSDEEIAVVLEKFKTYGLRIEE</sequence>
<dbReference type="EC" id="4.1.2.17" evidence="1"/>
<dbReference type="EMBL" id="AE005674">
    <property type="protein sequence ID" value="AAN44302.1"/>
    <property type="molecule type" value="Genomic_DNA"/>
</dbReference>
<dbReference type="EMBL" id="AE014073">
    <property type="protein sequence ID" value="AAP18127.1"/>
    <property type="molecule type" value="Genomic_DNA"/>
</dbReference>
<dbReference type="RefSeq" id="NP_708595.1">
    <property type="nucleotide sequence ID" value="NC_004337.2"/>
</dbReference>
<dbReference type="RefSeq" id="WP_000440781.1">
    <property type="nucleotide sequence ID" value="NZ_WPGW01000008.1"/>
</dbReference>
<dbReference type="SMR" id="P0AB88"/>
<dbReference type="STRING" id="198214.SF2814"/>
<dbReference type="PaxDb" id="198214-SF2814"/>
<dbReference type="GeneID" id="1025774"/>
<dbReference type="GeneID" id="75172884"/>
<dbReference type="KEGG" id="sfl:SF2814"/>
<dbReference type="KEGG" id="sfx:S3009"/>
<dbReference type="PATRIC" id="fig|198214.7.peg.3348"/>
<dbReference type="HOGENOM" id="CLU_006033_3_0_6"/>
<dbReference type="UniPathway" id="UPA00563">
    <property type="reaction ID" value="UER00626"/>
</dbReference>
<dbReference type="Proteomes" id="UP000001006">
    <property type="component" value="Chromosome"/>
</dbReference>
<dbReference type="Proteomes" id="UP000002673">
    <property type="component" value="Chromosome"/>
</dbReference>
<dbReference type="GO" id="GO:0005829">
    <property type="term" value="C:cytosol"/>
    <property type="evidence" value="ECO:0007669"/>
    <property type="project" value="TreeGrafter"/>
</dbReference>
<dbReference type="GO" id="GO:0008738">
    <property type="term" value="F:L-fuculose-phosphate aldolase activity"/>
    <property type="evidence" value="ECO:0007669"/>
    <property type="project" value="UniProtKB-UniRule"/>
</dbReference>
<dbReference type="GO" id="GO:0008270">
    <property type="term" value="F:zinc ion binding"/>
    <property type="evidence" value="ECO:0007669"/>
    <property type="project" value="UniProtKB-UniRule"/>
</dbReference>
<dbReference type="GO" id="GO:0019568">
    <property type="term" value="P:arabinose catabolic process"/>
    <property type="evidence" value="ECO:0007669"/>
    <property type="project" value="UniProtKB-KW"/>
</dbReference>
<dbReference type="GO" id="GO:0042355">
    <property type="term" value="P:L-fucose catabolic process"/>
    <property type="evidence" value="ECO:0007669"/>
    <property type="project" value="UniProtKB-UniRule"/>
</dbReference>
<dbReference type="CDD" id="cd00398">
    <property type="entry name" value="Aldolase_II"/>
    <property type="match status" value="1"/>
</dbReference>
<dbReference type="FunFam" id="3.40.225.10:FF:000005">
    <property type="entry name" value="L-fuculose phosphate aldolase"/>
    <property type="match status" value="1"/>
</dbReference>
<dbReference type="Gene3D" id="3.40.225.10">
    <property type="entry name" value="Class II aldolase/adducin N-terminal domain"/>
    <property type="match status" value="1"/>
</dbReference>
<dbReference type="HAMAP" id="MF_00987">
    <property type="entry name" value="FucA"/>
    <property type="match status" value="1"/>
</dbReference>
<dbReference type="InterPro" id="IPR050197">
    <property type="entry name" value="Aldolase_class_II_sugar_metab"/>
</dbReference>
<dbReference type="InterPro" id="IPR001303">
    <property type="entry name" value="Aldolase_II/adducin_N"/>
</dbReference>
<dbReference type="InterPro" id="IPR036409">
    <property type="entry name" value="Aldolase_II/adducin_N_sf"/>
</dbReference>
<dbReference type="InterPro" id="IPR004782">
    <property type="entry name" value="FucA"/>
</dbReference>
<dbReference type="NCBIfam" id="TIGR01086">
    <property type="entry name" value="fucA"/>
    <property type="match status" value="1"/>
</dbReference>
<dbReference type="NCBIfam" id="NF005984">
    <property type="entry name" value="PRK08087.1"/>
    <property type="match status" value="1"/>
</dbReference>
<dbReference type="PANTHER" id="PTHR22789:SF0">
    <property type="entry name" value="3-OXO-TETRONATE 4-PHOSPHATE DECARBOXYLASE-RELATED"/>
    <property type="match status" value="1"/>
</dbReference>
<dbReference type="PANTHER" id="PTHR22789">
    <property type="entry name" value="FUCULOSE PHOSPHATE ALDOLASE"/>
    <property type="match status" value="1"/>
</dbReference>
<dbReference type="Pfam" id="PF00596">
    <property type="entry name" value="Aldolase_II"/>
    <property type="match status" value="1"/>
</dbReference>
<dbReference type="SMART" id="SM01007">
    <property type="entry name" value="Aldolase_II"/>
    <property type="match status" value="1"/>
</dbReference>
<dbReference type="SUPFAM" id="SSF53639">
    <property type="entry name" value="AraD/HMP-PK domain-like"/>
    <property type="match status" value="1"/>
</dbReference>